<accession>C4ZY59</accession>
<evidence type="ECO:0000255" key="1">
    <source>
        <dbReference type="HAMAP-Rule" id="MF_00546"/>
    </source>
</evidence>
<evidence type="ECO:0000256" key="2">
    <source>
        <dbReference type="SAM" id="MobiDB-lite"/>
    </source>
</evidence>
<proteinExistence type="inferred from homology"/>
<feature type="signal peptide" evidence="1">
    <location>
        <begin position="1"/>
        <end position="21"/>
    </location>
</feature>
<feature type="propeptide" id="PRO_1000211967" evidence="1">
    <location>
        <begin position="22"/>
        <end position="58"/>
    </location>
</feature>
<feature type="chain" id="PRO_1000211968" description="Acid shock protein">
    <location>
        <begin position="59"/>
        <end position="102"/>
    </location>
</feature>
<feature type="region of interest" description="Disordered" evidence="2">
    <location>
        <begin position="21"/>
        <end position="102"/>
    </location>
</feature>
<feature type="compositionally biased region" description="Low complexity" evidence="2">
    <location>
        <begin position="21"/>
        <end position="41"/>
    </location>
</feature>
<feature type="compositionally biased region" description="Basic residues" evidence="2">
    <location>
        <begin position="80"/>
        <end position="90"/>
    </location>
</feature>
<feature type="compositionally biased region" description="Low complexity" evidence="2">
    <location>
        <begin position="91"/>
        <end position="102"/>
    </location>
</feature>
<keyword id="KW-0574">Periplasm</keyword>
<keyword id="KW-0732">Signal</keyword>
<name>ASR_ECOBW</name>
<sequence>MKKVLALVVAAAMGLSSAAFAAETTTTPAPTATTTKAAPAKTTHHKKQHKAAPAQKAQAAKKHHKNTKAEQKAPEQKAQAAKKHAKKHSHQQPAKPAAQPAA</sequence>
<comment type="function">
    <text evidence="1">Required for growth and/or survival at acidic conditions.</text>
</comment>
<comment type="subcellular location">
    <subcellularLocation>
        <location evidence="1">Periplasm</location>
    </subcellularLocation>
</comment>
<comment type="PTM">
    <text evidence="1">Proteolytic processing gives rise to the active protein.</text>
</comment>
<comment type="similarity">
    <text evidence="1">Belongs to the Asr family.</text>
</comment>
<organism>
    <name type="scientific">Escherichia coli (strain K12 / MC4100 / BW2952)</name>
    <dbReference type="NCBI Taxonomy" id="595496"/>
    <lineage>
        <taxon>Bacteria</taxon>
        <taxon>Pseudomonadati</taxon>
        <taxon>Pseudomonadota</taxon>
        <taxon>Gammaproteobacteria</taxon>
        <taxon>Enterobacterales</taxon>
        <taxon>Enterobacteriaceae</taxon>
        <taxon>Escherichia</taxon>
    </lineage>
</organism>
<dbReference type="EMBL" id="CP001396">
    <property type="protein sequence ID" value="ACR61917.1"/>
    <property type="molecule type" value="Genomic_DNA"/>
</dbReference>
<dbReference type="RefSeq" id="WP_001340364.1">
    <property type="nucleotide sequence ID" value="NC_012759.1"/>
</dbReference>
<dbReference type="KEGG" id="ebw:BWG_1411"/>
<dbReference type="HOGENOM" id="CLU_102486_2_0_6"/>
<dbReference type="GO" id="GO:0042597">
    <property type="term" value="C:periplasmic space"/>
    <property type="evidence" value="ECO:0007669"/>
    <property type="project" value="UniProtKB-SubCell"/>
</dbReference>
<dbReference type="HAMAP" id="MF_00546">
    <property type="entry name" value="Asr"/>
    <property type="match status" value="1"/>
</dbReference>
<dbReference type="InterPro" id="IPR023497">
    <property type="entry name" value="Acid_shock"/>
</dbReference>
<dbReference type="NCBIfam" id="NF033636">
    <property type="entry name" value="acid_shock_Asr"/>
    <property type="match status" value="1"/>
</dbReference>
<dbReference type="Pfam" id="PF06392">
    <property type="entry name" value="Asr"/>
    <property type="match status" value="1"/>
</dbReference>
<gene>
    <name evidence="1" type="primary">asr</name>
    <name type="ordered locus">BWG_1411</name>
</gene>
<reference key="1">
    <citation type="journal article" date="2009" name="J. Bacteriol.">
        <title>Genomic sequencing reveals regulatory mutations and recombinational events in the widely used MC4100 lineage of Escherichia coli K-12.</title>
        <authorList>
            <person name="Ferenci T."/>
            <person name="Zhou Z."/>
            <person name="Betteridge T."/>
            <person name="Ren Y."/>
            <person name="Liu Y."/>
            <person name="Feng L."/>
            <person name="Reeves P.R."/>
            <person name="Wang L."/>
        </authorList>
    </citation>
    <scope>NUCLEOTIDE SEQUENCE [LARGE SCALE GENOMIC DNA]</scope>
    <source>
        <strain>K12 / MC4100 / BW2952</strain>
    </source>
</reference>
<protein>
    <recommendedName>
        <fullName evidence="1">Acid shock protein</fullName>
    </recommendedName>
</protein>